<organism>
    <name type="scientific">Mus musculus</name>
    <name type="common">Mouse</name>
    <dbReference type="NCBI Taxonomy" id="10090"/>
    <lineage>
        <taxon>Eukaryota</taxon>
        <taxon>Metazoa</taxon>
        <taxon>Chordata</taxon>
        <taxon>Craniata</taxon>
        <taxon>Vertebrata</taxon>
        <taxon>Euteleostomi</taxon>
        <taxon>Mammalia</taxon>
        <taxon>Eutheria</taxon>
        <taxon>Euarchontoglires</taxon>
        <taxon>Glires</taxon>
        <taxon>Rodentia</taxon>
        <taxon>Myomorpha</taxon>
        <taxon>Muroidea</taxon>
        <taxon>Muridae</taxon>
        <taxon>Murinae</taxon>
        <taxon>Mus</taxon>
        <taxon>Mus</taxon>
    </lineage>
</organism>
<name>MIB1_MOUSE</name>
<evidence type="ECO:0000250" key="1"/>
<evidence type="ECO:0000250" key="2">
    <source>
        <dbReference type="UniProtKB" id="Q86YT6"/>
    </source>
</evidence>
<evidence type="ECO:0000255" key="3"/>
<evidence type="ECO:0000255" key="4">
    <source>
        <dbReference type="PROSITE-ProRule" id="PRU00175"/>
    </source>
</evidence>
<evidence type="ECO:0000255" key="5">
    <source>
        <dbReference type="PROSITE-ProRule" id="PRU00228"/>
    </source>
</evidence>
<evidence type="ECO:0000255" key="6">
    <source>
        <dbReference type="PROSITE-ProRule" id="PRU00749"/>
    </source>
</evidence>
<evidence type="ECO:0000269" key="7">
    <source>
    </source>
</evidence>
<evidence type="ECO:0000269" key="8">
    <source>
    </source>
</evidence>
<evidence type="ECO:0000305" key="9"/>
<feature type="chain" id="PRO_0000055944" description="E3 ubiquitin-protein ligase MIB1">
    <location>
        <begin position="1"/>
        <end position="1006"/>
    </location>
</feature>
<feature type="domain" description="MIB/HERC2 1" evidence="6">
    <location>
        <begin position="6"/>
        <end position="74"/>
    </location>
</feature>
<feature type="domain" description="MIB/HERC2 2" evidence="6">
    <location>
        <begin position="143"/>
        <end position="221"/>
    </location>
</feature>
<feature type="repeat" description="ANK 1">
    <location>
        <begin position="430"/>
        <end position="460"/>
    </location>
</feature>
<feature type="repeat" description="ANK 2">
    <location>
        <begin position="463"/>
        <end position="492"/>
    </location>
</feature>
<feature type="repeat" description="ANK 3">
    <location>
        <begin position="496"/>
        <end position="525"/>
    </location>
</feature>
<feature type="repeat" description="ANK 4">
    <location>
        <begin position="529"/>
        <end position="558"/>
    </location>
</feature>
<feature type="repeat" description="ANK 5">
    <location>
        <begin position="562"/>
        <end position="591"/>
    </location>
</feature>
<feature type="repeat" description="ANK 6">
    <location>
        <begin position="595"/>
        <end position="627"/>
    </location>
</feature>
<feature type="repeat" description="ANK 7">
    <location>
        <begin position="631"/>
        <end position="661"/>
    </location>
</feature>
<feature type="repeat" description="ANK 8">
    <location>
        <begin position="665"/>
        <end position="694"/>
    </location>
</feature>
<feature type="repeat" description="ANK 9">
    <location>
        <begin position="698"/>
        <end position="729"/>
    </location>
</feature>
<feature type="zinc finger region" description="ZZ-type" evidence="5">
    <location>
        <begin position="80"/>
        <end position="132"/>
    </location>
</feature>
<feature type="zinc finger region" description="RING-type 1" evidence="4">
    <location>
        <begin position="819"/>
        <end position="854"/>
    </location>
</feature>
<feature type="zinc finger region" description="RING-type 2" evidence="4">
    <location>
        <begin position="866"/>
        <end position="901"/>
    </location>
</feature>
<feature type="zinc finger region" description="RING-type 3" evidence="4">
    <location>
        <begin position="963"/>
        <end position="996"/>
    </location>
</feature>
<feature type="coiled-coil region" evidence="3">
    <location>
        <begin position="935"/>
        <end position="962"/>
    </location>
</feature>
<feature type="binding site" evidence="5">
    <location>
        <position position="85"/>
    </location>
    <ligand>
        <name>Zn(2+)</name>
        <dbReference type="ChEBI" id="CHEBI:29105"/>
        <label>1</label>
    </ligand>
</feature>
<feature type="binding site" evidence="5">
    <location>
        <position position="88"/>
    </location>
    <ligand>
        <name>Zn(2+)</name>
        <dbReference type="ChEBI" id="CHEBI:29105"/>
        <label>1</label>
    </ligand>
</feature>
<feature type="binding site" evidence="5">
    <location>
        <position position="100"/>
    </location>
    <ligand>
        <name>Zn(2+)</name>
        <dbReference type="ChEBI" id="CHEBI:29105"/>
        <label>2</label>
    </ligand>
</feature>
<feature type="binding site" evidence="5">
    <location>
        <position position="103"/>
    </location>
    <ligand>
        <name>Zn(2+)</name>
        <dbReference type="ChEBI" id="CHEBI:29105"/>
        <label>2</label>
    </ligand>
</feature>
<feature type="binding site" evidence="5">
    <location>
        <position position="109"/>
    </location>
    <ligand>
        <name>Zn(2+)</name>
        <dbReference type="ChEBI" id="CHEBI:29105"/>
        <label>1</label>
    </ligand>
</feature>
<feature type="binding site" evidence="5">
    <location>
        <position position="112"/>
    </location>
    <ligand>
        <name>Zn(2+)</name>
        <dbReference type="ChEBI" id="CHEBI:29105"/>
        <label>1</label>
    </ligand>
</feature>
<feature type="binding site" evidence="5">
    <location>
        <position position="118"/>
    </location>
    <ligand>
        <name>Zn(2+)</name>
        <dbReference type="ChEBI" id="CHEBI:29105"/>
        <label>2</label>
    </ligand>
</feature>
<feature type="binding site" evidence="5">
    <location>
        <position position="122"/>
    </location>
    <ligand>
        <name>Zn(2+)</name>
        <dbReference type="ChEBI" id="CHEBI:29105"/>
        <label>2</label>
    </ligand>
</feature>
<feature type="modified residue" description="Phosphoserine" evidence="2">
    <location>
        <position position="408"/>
    </location>
</feature>
<feature type="sequence conflict" description="In Ref. 4; BAC38042." evidence="9" ref="4">
    <original>L</original>
    <variation>F</variation>
    <location>
        <position position="742"/>
    </location>
</feature>
<feature type="sequence conflict" description="In Ref. 3; AAN18022/AAX84653." evidence="9" ref="3">
    <original>R</original>
    <variation>K</variation>
    <location>
        <position position="907"/>
    </location>
</feature>
<dbReference type="EC" id="2.3.2.27"/>
<dbReference type="EMBL" id="AY245539">
    <property type="protein sequence ID" value="AAO91933.1"/>
    <property type="molecule type" value="mRNA"/>
</dbReference>
<dbReference type="EMBL" id="AY149907">
    <property type="protein sequence ID" value="AAN75492.1"/>
    <property type="molecule type" value="mRNA"/>
</dbReference>
<dbReference type="EMBL" id="AY147848">
    <property type="protein sequence ID" value="AAN18022.1"/>
    <property type="status" value="ALT_INIT"/>
    <property type="molecule type" value="mRNA"/>
</dbReference>
<dbReference type="EMBL" id="AY974091">
    <property type="protein sequence ID" value="AAX84653.1"/>
    <property type="molecule type" value="mRNA"/>
</dbReference>
<dbReference type="EMBL" id="AK053035">
    <property type="protein sequence ID" value="BAC35245.1"/>
    <property type="molecule type" value="mRNA"/>
</dbReference>
<dbReference type="EMBL" id="AK080847">
    <property type="protein sequence ID" value="BAC38042.1"/>
    <property type="status" value="ALT_SEQ"/>
    <property type="molecule type" value="mRNA"/>
</dbReference>
<dbReference type="EMBL" id="BC011287">
    <property type="protein sequence ID" value="AAH11287.1"/>
    <property type="status" value="ALT_INIT"/>
    <property type="molecule type" value="mRNA"/>
</dbReference>
<dbReference type="EMBL" id="BC069870">
    <property type="protein sequence ID" value="AAH69870.1"/>
    <property type="status" value="ALT_SEQ"/>
    <property type="molecule type" value="mRNA"/>
</dbReference>
<dbReference type="EMBL" id="BC083072">
    <property type="protein sequence ID" value="AAH83072.1"/>
    <property type="molecule type" value="mRNA"/>
</dbReference>
<dbReference type="EMBL" id="AK129331">
    <property type="protein sequence ID" value="BAC98141.1"/>
    <property type="molecule type" value="mRNA"/>
</dbReference>
<dbReference type="CCDS" id="CCDS29058.1"/>
<dbReference type="RefSeq" id="NP_001351926.1">
    <property type="nucleotide sequence ID" value="NM_001364997.1"/>
</dbReference>
<dbReference type="RefSeq" id="NP_659109.2">
    <property type="nucleotide sequence ID" value="NM_144860.2"/>
</dbReference>
<dbReference type="RefSeq" id="XP_006525873.1">
    <property type="nucleotide sequence ID" value="XM_006525810.2"/>
</dbReference>
<dbReference type="RefSeq" id="XP_006525874.1">
    <property type="nucleotide sequence ID" value="XM_006525811.5"/>
</dbReference>
<dbReference type="SMR" id="Q80SY4"/>
<dbReference type="BioGRID" id="230365">
    <property type="interactions" value="45"/>
</dbReference>
<dbReference type="FunCoup" id="Q80SY4">
    <property type="interactions" value="4034"/>
</dbReference>
<dbReference type="IntAct" id="Q80SY4">
    <property type="interactions" value="30"/>
</dbReference>
<dbReference type="MINT" id="Q80SY4"/>
<dbReference type="STRING" id="10090.ENSMUSP00000054428"/>
<dbReference type="iPTMnet" id="Q80SY4"/>
<dbReference type="PhosphoSitePlus" id="Q80SY4"/>
<dbReference type="jPOST" id="Q80SY4"/>
<dbReference type="PaxDb" id="10090-ENSMUSP00000054428"/>
<dbReference type="ProteomicsDB" id="293477"/>
<dbReference type="Pumba" id="Q80SY4"/>
<dbReference type="Antibodypedia" id="7263">
    <property type="antibodies" value="343 antibodies from 38 providers"/>
</dbReference>
<dbReference type="DNASU" id="225164"/>
<dbReference type="Ensembl" id="ENSMUST00000052838.11">
    <property type="protein sequence ID" value="ENSMUSP00000054428.5"/>
    <property type="gene ID" value="ENSMUSG00000024294.16"/>
</dbReference>
<dbReference type="GeneID" id="225164"/>
<dbReference type="KEGG" id="mmu:225164"/>
<dbReference type="UCSC" id="uc008ebc.1">
    <property type="organism name" value="mouse"/>
</dbReference>
<dbReference type="AGR" id="MGI:2443157"/>
<dbReference type="CTD" id="57534"/>
<dbReference type="MGI" id="MGI:2443157">
    <property type="gene designation" value="Mib1"/>
</dbReference>
<dbReference type="VEuPathDB" id="HostDB:ENSMUSG00000024294"/>
<dbReference type="eggNOG" id="KOG0504">
    <property type="taxonomic scope" value="Eukaryota"/>
</dbReference>
<dbReference type="eggNOG" id="KOG4582">
    <property type="taxonomic scope" value="Eukaryota"/>
</dbReference>
<dbReference type="GeneTree" id="ENSGT00940000156781"/>
<dbReference type="HOGENOM" id="CLU_007287_1_0_1"/>
<dbReference type="InParanoid" id="Q80SY4"/>
<dbReference type="OMA" id="FFKPCGH"/>
<dbReference type="OrthoDB" id="2122982at2759"/>
<dbReference type="PhylomeDB" id="Q80SY4"/>
<dbReference type="TreeFam" id="TF324147"/>
<dbReference type="UniPathway" id="UPA00143"/>
<dbReference type="BioGRID-ORCS" id="225164">
    <property type="hits" value="9 hits in 80 CRISPR screens"/>
</dbReference>
<dbReference type="ChiTaRS" id="Mib1">
    <property type="organism name" value="mouse"/>
</dbReference>
<dbReference type="PRO" id="PR:Q80SY4"/>
<dbReference type="Proteomes" id="UP000000589">
    <property type="component" value="Chromosome 18"/>
</dbReference>
<dbReference type="RNAct" id="Q80SY4">
    <property type="molecule type" value="protein"/>
</dbReference>
<dbReference type="Bgee" id="ENSMUSG00000024294">
    <property type="expression patterns" value="Expressed in metanephric cortical collecting duct and 244 other cell types or tissues"/>
</dbReference>
<dbReference type="ExpressionAtlas" id="Q80SY4">
    <property type="expression patterns" value="baseline and differential"/>
</dbReference>
<dbReference type="GO" id="GO:0034451">
    <property type="term" value="C:centriolar satellite"/>
    <property type="evidence" value="ECO:0007669"/>
    <property type="project" value="UniProtKB-SubCell"/>
</dbReference>
<dbReference type="GO" id="GO:0031410">
    <property type="term" value="C:cytoplasmic vesicle"/>
    <property type="evidence" value="ECO:0000314"/>
    <property type="project" value="MGI"/>
</dbReference>
<dbReference type="GO" id="GO:0098978">
    <property type="term" value="C:glutamatergic synapse"/>
    <property type="evidence" value="ECO:0000314"/>
    <property type="project" value="SynGO"/>
</dbReference>
<dbReference type="GO" id="GO:0005886">
    <property type="term" value="C:plasma membrane"/>
    <property type="evidence" value="ECO:0007669"/>
    <property type="project" value="UniProtKB-SubCell"/>
</dbReference>
<dbReference type="GO" id="GO:0014069">
    <property type="term" value="C:postsynaptic density"/>
    <property type="evidence" value="ECO:0000314"/>
    <property type="project" value="SynGO"/>
</dbReference>
<dbReference type="GO" id="GO:0004842">
    <property type="term" value="F:ubiquitin-protein transferase activity"/>
    <property type="evidence" value="ECO:0007669"/>
    <property type="project" value="InterPro"/>
</dbReference>
<dbReference type="GO" id="GO:0008270">
    <property type="term" value="F:zinc ion binding"/>
    <property type="evidence" value="ECO:0007669"/>
    <property type="project" value="UniProtKB-KW"/>
</dbReference>
<dbReference type="GO" id="GO:0001568">
    <property type="term" value="P:blood vessel development"/>
    <property type="evidence" value="ECO:0000315"/>
    <property type="project" value="MGI"/>
</dbReference>
<dbReference type="GO" id="GO:0021953">
    <property type="term" value="P:central nervous system neuron differentiation"/>
    <property type="evidence" value="ECO:0000315"/>
    <property type="project" value="MGI"/>
</dbReference>
<dbReference type="GO" id="GO:0007507">
    <property type="term" value="P:heart development"/>
    <property type="evidence" value="ECO:0000315"/>
    <property type="project" value="MGI"/>
</dbReference>
<dbReference type="GO" id="GO:0001947">
    <property type="term" value="P:heart looping"/>
    <property type="evidence" value="ECO:0000315"/>
    <property type="project" value="MGI"/>
</dbReference>
<dbReference type="GO" id="GO:0001701">
    <property type="term" value="P:in utero embryonic development"/>
    <property type="evidence" value="ECO:0000315"/>
    <property type="project" value="MGI"/>
</dbReference>
<dbReference type="GO" id="GO:0045665">
    <property type="term" value="P:negative regulation of neuron differentiation"/>
    <property type="evidence" value="ECO:0000315"/>
    <property type="project" value="MGI"/>
</dbReference>
<dbReference type="GO" id="GO:0001841">
    <property type="term" value="P:neural tube formation"/>
    <property type="evidence" value="ECO:0000315"/>
    <property type="project" value="MGI"/>
</dbReference>
<dbReference type="GO" id="GO:0007219">
    <property type="term" value="P:Notch signaling pathway"/>
    <property type="evidence" value="ECO:0000315"/>
    <property type="project" value="MGI"/>
</dbReference>
<dbReference type="GO" id="GO:0045807">
    <property type="term" value="P:positive regulation of endocytosis"/>
    <property type="evidence" value="ECO:0000314"/>
    <property type="project" value="MGI"/>
</dbReference>
<dbReference type="GO" id="GO:0016567">
    <property type="term" value="P:protein ubiquitination"/>
    <property type="evidence" value="ECO:0007669"/>
    <property type="project" value="UniProtKB-UniPathway"/>
</dbReference>
<dbReference type="GO" id="GO:0001756">
    <property type="term" value="P:somitogenesis"/>
    <property type="evidence" value="ECO:0000315"/>
    <property type="project" value="MGI"/>
</dbReference>
<dbReference type="GO" id="GO:0006511">
    <property type="term" value="P:ubiquitin-dependent protein catabolic process"/>
    <property type="evidence" value="ECO:0007669"/>
    <property type="project" value="Ensembl"/>
</dbReference>
<dbReference type="CDD" id="cd16724">
    <property type="entry name" value="RING-HC_MIB1_rpt1"/>
    <property type="match status" value="1"/>
</dbReference>
<dbReference type="CDD" id="cd16725">
    <property type="entry name" value="RING-HC_MIB1_rpt2"/>
    <property type="match status" value="1"/>
</dbReference>
<dbReference type="CDD" id="cd16727">
    <property type="entry name" value="RING-HC_MIB1_rpt3"/>
    <property type="match status" value="1"/>
</dbReference>
<dbReference type="CDD" id="cd02339">
    <property type="entry name" value="ZZ_Mind_bomb"/>
    <property type="match status" value="1"/>
</dbReference>
<dbReference type="FunFam" id="1.25.40.20:FF:000059">
    <property type="entry name" value="E3 ubiquitin-protein ligase MIB1 isoform X1"/>
    <property type="match status" value="1"/>
</dbReference>
<dbReference type="FunFam" id="1.25.40.20:FF:000191">
    <property type="entry name" value="E3 ubiquitin-protein ligase MIB1 isoform X1"/>
    <property type="match status" value="1"/>
</dbReference>
<dbReference type="FunFam" id="2.30.30.40:FF:000090">
    <property type="entry name" value="E3 ubiquitin-protein ligase MIB1 isoform X1"/>
    <property type="match status" value="1"/>
</dbReference>
<dbReference type="FunFam" id="3.30.40.10:FF:000083">
    <property type="entry name" value="E3 ubiquitin-protein ligase MIB1 isoform X1"/>
    <property type="match status" value="1"/>
</dbReference>
<dbReference type="FunFam" id="3.30.40.10:FF:000085">
    <property type="entry name" value="E3 ubiquitin-protein ligase MIB1 isoform X1"/>
    <property type="match status" value="1"/>
</dbReference>
<dbReference type="FunFam" id="3.30.40.10:FF:000135">
    <property type="entry name" value="E3 ubiquitin-protein ligase mib1 isoform X1"/>
    <property type="match status" value="1"/>
</dbReference>
<dbReference type="FunFam" id="3.30.60.90:FF:000005">
    <property type="entry name" value="Putative E3 ubiquitin-protein ligase mib1"/>
    <property type="match status" value="1"/>
</dbReference>
<dbReference type="FunFam" id="2.30.30.40:FF:000054">
    <property type="entry name" value="Putative e3 ubiquitin-protein ligase mind-bomb"/>
    <property type="match status" value="1"/>
</dbReference>
<dbReference type="Gene3D" id="3.30.60.90">
    <property type="match status" value="1"/>
</dbReference>
<dbReference type="Gene3D" id="1.25.40.20">
    <property type="entry name" value="Ankyrin repeat-containing domain"/>
    <property type="match status" value="3"/>
</dbReference>
<dbReference type="Gene3D" id="2.30.30.40">
    <property type="entry name" value="SH3 Domains"/>
    <property type="match status" value="2"/>
</dbReference>
<dbReference type="Gene3D" id="3.30.40.10">
    <property type="entry name" value="Zinc/RING finger domain, C3HC4 (zinc finger)"/>
    <property type="match status" value="3"/>
</dbReference>
<dbReference type="InterPro" id="IPR002110">
    <property type="entry name" value="Ankyrin_rpt"/>
</dbReference>
<dbReference type="InterPro" id="IPR036770">
    <property type="entry name" value="Ankyrin_rpt-contain_sf"/>
</dbReference>
<dbReference type="InterPro" id="IPR042056">
    <property type="entry name" value="MIB1/2_ZZ"/>
</dbReference>
<dbReference type="InterPro" id="IPR010606">
    <property type="entry name" value="Mib_Herc2"/>
</dbReference>
<dbReference type="InterPro" id="IPR037252">
    <property type="entry name" value="Mib_Herc2_sf"/>
</dbReference>
<dbReference type="InterPro" id="IPR040847">
    <property type="entry name" value="SH3_15"/>
</dbReference>
<dbReference type="InterPro" id="IPR001841">
    <property type="entry name" value="Znf_RING"/>
</dbReference>
<dbReference type="InterPro" id="IPR013083">
    <property type="entry name" value="Znf_RING/FYVE/PHD"/>
</dbReference>
<dbReference type="InterPro" id="IPR000433">
    <property type="entry name" value="Znf_ZZ"/>
</dbReference>
<dbReference type="InterPro" id="IPR043145">
    <property type="entry name" value="Znf_ZZ_sf"/>
</dbReference>
<dbReference type="PANTHER" id="PTHR24202:SF53">
    <property type="entry name" value="E3 UBIQUITIN-PROTEIN LIGASE MIB1"/>
    <property type="match status" value="1"/>
</dbReference>
<dbReference type="PANTHER" id="PTHR24202">
    <property type="entry name" value="E3 UBIQUITIN-PROTEIN LIGASE MIB2"/>
    <property type="match status" value="1"/>
</dbReference>
<dbReference type="Pfam" id="PF00023">
    <property type="entry name" value="Ank"/>
    <property type="match status" value="1"/>
</dbReference>
<dbReference type="Pfam" id="PF12796">
    <property type="entry name" value="Ank_2"/>
    <property type="match status" value="2"/>
</dbReference>
<dbReference type="Pfam" id="PF06701">
    <property type="entry name" value="MIB_HERC2"/>
    <property type="match status" value="2"/>
</dbReference>
<dbReference type="Pfam" id="PF18346">
    <property type="entry name" value="SH3_15"/>
    <property type="match status" value="2"/>
</dbReference>
<dbReference type="Pfam" id="PF13920">
    <property type="entry name" value="zf-C3HC4_3"/>
    <property type="match status" value="3"/>
</dbReference>
<dbReference type="Pfam" id="PF00569">
    <property type="entry name" value="ZZ"/>
    <property type="match status" value="1"/>
</dbReference>
<dbReference type="PRINTS" id="PR01415">
    <property type="entry name" value="ANKYRIN"/>
</dbReference>
<dbReference type="SMART" id="SM00248">
    <property type="entry name" value="ANK"/>
    <property type="match status" value="9"/>
</dbReference>
<dbReference type="SMART" id="SM00184">
    <property type="entry name" value="RING"/>
    <property type="match status" value="3"/>
</dbReference>
<dbReference type="SMART" id="SM00291">
    <property type="entry name" value="ZnF_ZZ"/>
    <property type="match status" value="1"/>
</dbReference>
<dbReference type="SUPFAM" id="SSF48403">
    <property type="entry name" value="Ankyrin repeat"/>
    <property type="match status" value="1"/>
</dbReference>
<dbReference type="SUPFAM" id="SSF159034">
    <property type="entry name" value="Mib/herc2 domain-like"/>
    <property type="match status" value="2"/>
</dbReference>
<dbReference type="SUPFAM" id="SSF57850">
    <property type="entry name" value="RING/U-box"/>
    <property type="match status" value="2"/>
</dbReference>
<dbReference type="PROSITE" id="PS50297">
    <property type="entry name" value="ANK_REP_REGION"/>
    <property type="match status" value="1"/>
</dbReference>
<dbReference type="PROSITE" id="PS50088">
    <property type="entry name" value="ANK_REPEAT"/>
    <property type="match status" value="6"/>
</dbReference>
<dbReference type="PROSITE" id="PS51416">
    <property type="entry name" value="MIB_HERC2"/>
    <property type="match status" value="2"/>
</dbReference>
<dbReference type="PROSITE" id="PS50089">
    <property type="entry name" value="ZF_RING_2"/>
    <property type="match status" value="3"/>
</dbReference>
<dbReference type="PROSITE" id="PS01357">
    <property type="entry name" value="ZF_ZZ_1"/>
    <property type="match status" value="1"/>
</dbReference>
<dbReference type="PROSITE" id="PS50135">
    <property type="entry name" value="ZF_ZZ_2"/>
    <property type="match status" value="1"/>
</dbReference>
<proteinExistence type="evidence at protein level"/>
<keyword id="KW-0040">ANK repeat</keyword>
<keyword id="KW-1003">Cell membrane</keyword>
<keyword id="KW-0175">Coiled coil</keyword>
<keyword id="KW-0963">Cytoplasm</keyword>
<keyword id="KW-0206">Cytoskeleton</keyword>
<keyword id="KW-0472">Membrane</keyword>
<keyword id="KW-0479">Metal-binding</keyword>
<keyword id="KW-0914">Notch signaling pathway</keyword>
<keyword id="KW-0597">Phosphoprotein</keyword>
<keyword id="KW-1185">Reference proteome</keyword>
<keyword id="KW-0677">Repeat</keyword>
<keyword id="KW-0808">Transferase</keyword>
<keyword id="KW-0832">Ubl conjugation</keyword>
<keyword id="KW-0833">Ubl conjugation pathway</keyword>
<keyword id="KW-0862">Zinc</keyword>
<keyword id="KW-0863">Zinc-finger</keyword>
<reference key="1">
    <citation type="journal article" date="2002" name="J. Biol. Chem.">
        <title>A death-associated protein kinase (DAPK)-interacting protein, DIP-1, is an E3 ubiquitin ligase that promotes tumor necrosis factor-induced apoptosis and regulates the cellular levels of DAPK.</title>
        <authorList>
            <person name="Jin Y."/>
            <person name="Blue E.K."/>
            <person name="Dixon S."/>
            <person name="Shao Z."/>
            <person name="Gallagher P.J."/>
        </authorList>
    </citation>
    <scope>NUCLEOTIDE SEQUENCE [MRNA]</scope>
    <scope>FUNCTION</scope>
    <scope>TISSUE SPECIFICITY</scope>
    <scope>UBIQUITINATION</scope>
    <source>
        <tissue>Urinary bladder</tissue>
    </source>
</reference>
<reference key="2">
    <citation type="journal article" date="2003" name="Dev. Cell">
        <title>Mind bomb is a ubiquitin ligase that is essential for efficient activation of Notch signaling by Delta.</title>
        <authorList>
            <person name="Itoh M."/>
            <person name="Kim C.-H."/>
            <person name="Palardy G."/>
            <person name="Oda T."/>
            <person name="Jiang Y.-J."/>
            <person name="Maust D."/>
            <person name="Yeo S.-Y."/>
            <person name="Lorick K."/>
            <person name="Wright G.J."/>
            <person name="Ariza-McNaughton L."/>
            <person name="Weissman A.M."/>
            <person name="Lewis J."/>
            <person name="Chandrasekharappa S.C."/>
            <person name="Chitnis A.B."/>
        </authorList>
    </citation>
    <scope>NUCLEOTIDE SEQUENCE [MRNA]</scope>
    <source>
        <strain>C3H/HeJ</strain>
    </source>
</reference>
<reference key="3">
    <citation type="journal article" date="2005" name="J. Biol. Chem.">
        <title>Mind bomb-2 is an E3 ligase for Notch ligand.</title>
        <authorList>
            <person name="Koo B.-K."/>
            <person name="Yoon K.-J."/>
            <person name="Yoo K.-W."/>
            <person name="Lim H.-S."/>
            <person name="Song R."/>
            <person name="So J.-H."/>
            <person name="Kim C.-H."/>
            <person name="Kong Y.-Y."/>
        </authorList>
    </citation>
    <scope>NUCLEOTIDE SEQUENCE [MRNA]</scope>
    <scope>TISSUE SPECIFICITY</scope>
    <scope>DEVELOPMENTAL STAGE</scope>
    <scope>UBIQUITINATION</scope>
</reference>
<reference key="4">
    <citation type="journal article" date="2005" name="Science">
        <title>The transcriptional landscape of the mammalian genome.</title>
        <authorList>
            <person name="Carninci P."/>
            <person name="Kasukawa T."/>
            <person name="Katayama S."/>
            <person name="Gough J."/>
            <person name="Frith M.C."/>
            <person name="Maeda N."/>
            <person name="Oyama R."/>
            <person name="Ravasi T."/>
            <person name="Lenhard B."/>
            <person name="Wells C."/>
            <person name="Kodzius R."/>
            <person name="Shimokawa K."/>
            <person name="Bajic V.B."/>
            <person name="Brenner S.E."/>
            <person name="Batalov S."/>
            <person name="Forrest A.R."/>
            <person name="Zavolan M."/>
            <person name="Davis M.J."/>
            <person name="Wilming L.G."/>
            <person name="Aidinis V."/>
            <person name="Allen J.E."/>
            <person name="Ambesi-Impiombato A."/>
            <person name="Apweiler R."/>
            <person name="Aturaliya R.N."/>
            <person name="Bailey T.L."/>
            <person name="Bansal M."/>
            <person name="Baxter L."/>
            <person name="Beisel K.W."/>
            <person name="Bersano T."/>
            <person name="Bono H."/>
            <person name="Chalk A.M."/>
            <person name="Chiu K.P."/>
            <person name="Choudhary V."/>
            <person name="Christoffels A."/>
            <person name="Clutterbuck D.R."/>
            <person name="Crowe M.L."/>
            <person name="Dalla E."/>
            <person name="Dalrymple B.P."/>
            <person name="de Bono B."/>
            <person name="Della Gatta G."/>
            <person name="di Bernardo D."/>
            <person name="Down T."/>
            <person name="Engstrom P."/>
            <person name="Fagiolini M."/>
            <person name="Faulkner G."/>
            <person name="Fletcher C.F."/>
            <person name="Fukushima T."/>
            <person name="Furuno M."/>
            <person name="Futaki S."/>
            <person name="Gariboldi M."/>
            <person name="Georgii-Hemming P."/>
            <person name="Gingeras T.R."/>
            <person name="Gojobori T."/>
            <person name="Green R.E."/>
            <person name="Gustincich S."/>
            <person name="Harbers M."/>
            <person name="Hayashi Y."/>
            <person name="Hensch T.K."/>
            <person name="Hirokawa N."/>
            <person name="Hill D."/>
            <person name="Huminiecki L."/>
            <person name="Iacono M."/>
            <person name="Ikeo K."/>
            <person name="Iwama A."/>
            <person name="Ishikawa T."/>
            <person name="Jakt M."/>
            <person name="Kanapin A."/>
            <person name="Katoh M."/>
            <person name="Kawasawa Y."/>
            <person name="Kelso J."/>
            <person name="Kitamura H."/>
            <person name="Kitano H."/>
            <person name="Kollias G."/>
            <person name="Krishnan S.P."/>
            <person name="Kruger A."/>
            <person name="Kummerfeld S.K."/>
            <person name="Kurochkin I.V."/>
            <person name="Lareau L.F."/>
            <person name="Lazarevic D."/>
            <person name="Lipovich L."/>
            <person name="Liu J."/>
            <person name="Liuni S."/>
            <person name="McWilliam S."/>
            <person name="Madan Babu M."/>
            <person name="Madera M."/>
            <person name="Marchionni L."/>
            <person name="Matsuda H."/>
            <person name="Matsuzawa S."/>
            <person name="Miki H."/>
            <person name="Mignone F."/>
            <person name="Miyake S."/>
            <person name="Morris K."/>
            <person name="Mottagui-Tabar S."/>
            <person name="Mulder N."/>
            <person name="Nakano N."/>
            <person name="Nakauchi H."/>
            <person name="Ng P."/>
            <person name="Nilsson R."/>
            <person name="Nishiguchi S."/>
            <person name="Nishikawa S."/>
            <person name="Nori F."/>
            <person name="Ohara O."/>
            <person name="Okazaki Y."/>
            <person name="Orlando V."/>
            <person name="Pang K.C."/>
            <person name="Pavan W.J."/>
            <person name="Pavesi G."/>
            <person name="Pesole G."/>
            <person name="Petrovsky N."/>
            <person name="Piazza S."/>
            <person name="Reed J."/>
            <person name="Reid J.F."/>
            <person name="Ring B.Z."/>
            <person name="Ringwald M."/>
            <person name="Rost B."/>
            <person name="Ruan Y."/>
            <person name="Salzberg S.L."/>
            <person name="Sandelin A."/>
            <person name="Schneider C."/>
            <person name="Schoenbach C."/>
            <person name="Sekiguchi K."/>
            <person name="Semple C.A."/>
            <person name="Seno S."/>
            <person name="Sessa L."/>
            <person name="Sheng Y."/>
            <person name="Shibata Y."/>
            <person name="Shimada H."/>
            <person name="Shimada K."/>
            <person name="Silva D."/>
            <person name="Sinclair B."/>
            <person name="Sperling S."/>
            <person name="Stupka E."/>
            <person name="Sugiura K."/>
            <person name="Sultana R."/>
            <person name="Takenaka Y."/>
            <person name="Taki K."/>
            <person name="Tammoja K."/>
            <person name="Tan S.L."/>
            <person name="Tang S."/>
            <person name="Taylor M.S."/>
            <person name="Tegner J."/>
            <person name="Teichmann S.A."/>
            <person name="Ueda H.R."/>
            <person name="van Nimwegen E."/>
            <person name="Verardo R."/>
            <person name="Wei C.L."/>
            <person name="Yagi K."/>
            <person name="Yamanishi H."/>
            <person name="Zabarovsky E."/>
            <person name="Zhu S."/>
            <person name="Zimmer A."/>
            <person name="Hide W."/>
            <person name="Bult C."/>
            <person name="Grimmond S.M."/>
            <person name="Teasdale R.D."/>
            <person name="Liu E.T."/>
            <person name="Brusic V."/>
            <person name="Quackenbush J."/>
            <person name="Wahlestedt C."/>
            <person name="Mattick J.S."/>
            <person name="Hume D.A."/>
            <person name="Kai C."/>
            <person name="Sasaki D."/>
            <person name="Tomaru Y."/>
            <person name="Fukuda S."/>
            <person name="Kanamori-Katayama M."/>
            <person name="Suzuki M."/>
            <person name="Aoki J."/>
            <person name="Arakawa T."/>
            <person name="Iida J."/>
            <person name="Imamura K."/>
            <person name="Itoh M."/>
            <person name="Kato T."/>
            <person name="Kawaji H."/>
            <person name="Kawagashira N."/>
            <person name="Kawashima T."/>
            <person name="Kojima M."/>
            <person name="Kondo S."/>
            <person name="Konno H."/>
            <person name="Nakano K."/>
            <person name="Ninomiya N."/>
            <person name="Nishio T."/>
            <person name="Okada M."/>
            <person name="Plessy C."/>
            <person name="Shibata K."/>
            <person name="Shiraki T."/>
            <person name="Suzuki S."/>
            <person name="Tagami M."/>
            <person name="Waki K."/>
            <person name="Watahiki A."/>
            <person name="Okamura-Oho Y."/>
            <person name="Suzuki H."/>
            <person name="Kawai J."/>
            <person name="Hayashizaki Y."/>
        </authorList>
    </citation>
    <scope>NUCLEOTIDE SEQUENCE [LARGE SCALE MRNA] OF 349-1006</scope>
    <source>
        <strain>C57BL/6J</strain>
        <tissue>Corpora quadrigemina</tissue>
        <tissue>Head</tissue>
    </source>
</reference>
<reference key="5">
    <citation type="journal article" date="2004" name="Genome Res.">
        <title>The status, quality, and expansion of the NIH full-length cDNA project: the Mammalian Gene Collection (MGC).</title>
        <authorList>
            <consortium name="The MGC Project Team"/>
        </authorList>
    </citation>
    <scope>NUCLEOTIDE SEQUENCE [LARGE SCALE MRNA] OF 547-1006</scope>
    <source>
        <strain>129</strain>
        <strain>FVB/N</strain>
        <tissue>Embryo</tissue>
        <tissue>Mammary tumor</tissue>
    </source>
</reference>
<reference key="6">
    <citation type="journal article" date="2003" name="DNA Res.">
        <title>Prediction of the coding sequences of mouse homologues of KIAA gene: III. The complete nucleotide sequences of 500 mouse KIAA-homologous cDNAs identified by screening of terminal sequences of cDNA clones randomly sampled from size-fractionated libraries.</title>
        <authorList>
            <person name="Okazaki N."/>
            <person name="Kikuno R."/>
            <person name="Ohara R."/>
            <person name="Inamoto S."/>
            <person name="Koseki H."/>
            <person name="Hiraoka S."/>
            <person name="Saga Y."/>
            <person name="Nagase T."/>
            <person name="Ohara O."/>
            <person name="Koga H."/>
        </authorList>
    </citation>
    <scope>NUCLEOTIDE SEQUENCE [LARGE SCALE MRNA] OF 864-1006</scope>
    <source>
        <tissue>Embryonic tail</tissue>
    </source>
</reference>
<reference key="7">
    <citation type="journal article" date="2010" name="Cell">
        <title>A tissue-specific atlas of mouse protein phosphorylation and expression.</title>
        <authorList>
            <person name="Huttlin E.L."/>
            <person name="Jedrychowski M.P."/>
            <person name="Elias J.E."/>
            <person name="Goswami T."/>
            <person name="Rad R."/>
            <person name="Beausoleil S.A."/>
            <person name="Villen J."/>
            <person name="Haas W."/>
            <person name="Sowa M.E."/>
            <person name="Gygi S.P."/>
        </authorList>
    </citation>
    <scope>IDENTIFICATION BY MASS SPECTROMETRY [LARGE SCALE ANALYSIS]</scope>
    <source>
        <tissue>Brown adipose tissue</tissue>
        <tissue>Kidney</tissue>
        <tissue>Liver</tissue>
        <tissue>Lung</tissue>
        <tissue>Pancreas</tissue>
        <tissue>Spleen</tissue>
        <tissue>Testis</tissue>
    </source>
</reference>
<accession>Q80SY4</accession>
<accession>Q5XK51</accession>
<accession>Q6IS57</accession>
<accession>Q6YI52</accession>
<accession>Q6ZPT8</accession>
<accession>Q8BNR1</accession>
<accession>Q8C6W2</accession>
<accession>Q921Q1</accession>
<gene>
    <name type="primary">Mib1</name>
    <name type="synonym">Dip1</name>
    <name type="synonym">Kiaa1323</name>
    <name type="synonym">Mib</name>
</gene>
<sequence length="1006" mass="110088">MSNSRNNRVMVEGVGARVVRGPDWKWGKQDGGEGHVGTVRSFESPEEVVVVWDNGTAANYRCSGAYDLRILDSAPTGIKHDGTMCDTCRQQPIIGIRWKCAECTNYDLCTVCYHGDKHHLRHRFYRITTPGSERVLLESRRKSKKITARGIFAGARVVRGVDWQWEDQDGGNGRRGKVTEIQDWSASSPHSAAYVLWDNGAKNLYRVGFEGMSDLKCVQDAKGGSFYRDHCPVLGEQNGNRNPGGLQIGDLVNIDLDLEIVQSLQHGHGGWTDGMFETLTTTGTVCGIDEDHDIVVQYPSGNRWTFNPAVLTKANIVRSGDAAQGAEGGTSQFQVGDLVQVCYDLERIKLLQRGHGEWAEAMLPTLGKVGRVQQIYSDSDLKVEVCGTSWTYNPAAVSKVAPAGSAISNASGERLSQLLKKLFETQESGDLNEELVKAAANGDVAKVEDLLKRPDVDVNGQCAGHTAMQAASQNGHVDILKLLLKQNVDVEAEDKDGDRAVHHAAFGDEGAVIEVLHRGSADLNARNKRRQTPLHIAVNKGHLQVVKTLLDFGCHPSLQDSEGDTPLHDAISKKRDDILAVLLEAGADVTITNNNGFNALHHAALRGNPSAMRVLLSKLPRPWIVDEKKDDGYTALHLAALNNHVEVAELLVHQGNANLDIQNVNQQTALHLAVERQHTQIVRLLVRAGAKLDIQDKDGDTPLHEALRHHTLSQLRQLQDMQDVGKVDAAWEPSKNTLIMGLGTQGAEKKSAASIACFLAANGADLSIRNKKGQSPLDLCPDPSLCKALAKCHKEKVSGQVGSRSPSMISNDSETLEECMVCSDMKRDTLFGPCGHIATCSLCSPRVKKCLICKEQVQSRTKIEECVVCSDKKAAVLFQPCGHMCACENCASLMKKCVQCRAVVERRVPFITCCGGKSSEDPSDEISSGNIPVLQKDKDNTNVNADVQKLQQQLQDIKEQTMCPVCLDRLKNMIFLCGHGTCQLCGDRMSECPICRKAIERRILLY</sequence>
<protein>
    <recommendedName>
        <fullName>E3 ubiquitin-protein ligase MIB1</fullName>
        <ecNumber>2.3.2.27</ecNumber>
    </recommendedName>
    <alternativeName>
        <fullName>DAPK-interacting protein 1</fullName>
        <shortName>DIP-1</shortName>
    </alternativeName>
    <alternativeName>
        <fullName>Mind bomb homolog 1</fullName>
    </alternativeName>
    <alternativeName>
        <fullName evidence="9">RING-type E3 ubiquitin transferase MIB1</fullName>
    </alternativeName>
</protein>
<comment type="function">
    <text evidence="1 7">E3 ubiquitin-protein ligase that mediates ubiquitination of Delta receptors, which act as ligands of Notch proteins. Positively regulates the Delta-mediated Notch signaling by ubiquitinating the intracellular domain of Delta, leading to endocytosis of Delta receptors. Involved in ubiquitination of centriolar satellite CEP131, CEP290 and PCM1 proteins and hence inhibits primary cilium formation in proliferating cells. Mediates 'Lys-63'-linked polyubiquitination of TBK1, which probably participates in kinase activation (By similarity). Probably mediates ubiquitination and subsequent proteasomal degradation of DAPK1, thereby antagonizing anti-apoptotic effects of DAPK1 to promote TNF-induced apoptosis.</text>
</comment>
<comment type="catalytic activity">
    <reaction>
        <text>S-ubiquitinyl-[E2 ubiquitin-conjugating enzyme]-L-cysteine + [acceptor protein]-L-lysine = [E2 ubiquitin-conjugating enzyme]-L-cysteine + N(6)-ubiquitinyl-[acceptor protein]-L-lysine.</text>
        <dbReference type="EC" id="2.3.2.27"/>
    </reaction>
</comment>
<comment type="pathway">
    <text>Protein modification; protein ubiquitination.</text>
</comment>
<comment type="subunit">
    <text evidence="1">Interacts with CEP131 and PCM1.</text>
</comment>
<comment type="interaction">
    <interactant intactId="EBI-645227">
        <id>Q80SY4</id>
    </interactant>
    <interactant intactId="EBI-7689652">
        <id>Q8IY22</id>
        <label>CMIP</label>
    </interactant>
    <organismsDiffer>true</organismsDiffer>
    <experiments>2</experiments>
</comment>
<comment type="interaction">
    <interactant intactId="EBI-645227">
        <id>Q80SY4</id>
    </interactant>
    <interactant intactId="EBI-42472685">
        <id>Q803H8</id>
        <label>snx5</label>
    </interactant>
    <organismsDiffer>true</organismsDiffer>
    <experiments>4</experiments>
</comment>
<comment type="subcellular location">
    <subcellularLocation>
        <location evidence="1">Cytoplasm</location>
        <location evidence="1">Cytoskeleton</location>
        <location evidence="1">Microtubule organizing center</location>
        <location evidence="1">Centrosome</location>
        <location evidence="1">Centriolar satellite</location>
    </subcellularLocation>
    <subcellularLocation>
        <location>Cytoplasm</location>
    </subcellularLocation>
    <subcellularLocation>
        <location>Cell membrane</location>
    </subcellularLocation>
    <text evidence="1">Displaced from centriolar satellites in response to cellular stress, such as ultraviolet light (UV) radiation or heat shock (By similarity). Localizes to the plasma membrane.</text>
</comment>
<comment type="tissue specificity">
    <text evidence="7 8">Detected in all tissues tested. Present in embryo, embryonic stem cells, bladder, skeletal muscle, bladder, uterus, testis, stomach, colon, ileum, trachea, lung, aorta, kidney, spleen, liver and vas deferens (at protein level). Highly expressed in testis.</text>
</comment>
<comment type="developmental stage">
    <text evidence="8">Highly expressed both in embryos and adult tissues. In 9.5 dpc and 10.5 dpc embryos, it is expressed in the tail bud, limb buds and somites. Expressed in the same pattern than MIB2 in the skin and intestine at postnatal day 1 (P1) and in the hair follicle in the skin in the adult.</text>
</comment>
<comment type="PTM">
    <text evidence="1 7 8">Ubiquitinated; this modification is inhibited in response to cellular stress, such as ultraviolet light (UV) radiation or heat shock (By similarity). Ubiquitinated; possibly via autoubiquitination.</text>
</comment>
<comment type="sequence caution" evidence="9">
    <conflict type="erroneous initiation">
        <sequence resource="EMBL-CDS" id="AAH11287"/>
    </conflict>
</comment>
<comment type="sequence caution" evidence="9">
    <conflict type="miscellaneous discrepancy">
        <sequence resource="EMBL-CDS" id="AAH69870"/>
    </conflict>
    <text>Chimeric cDNA.</text>
</comment>
<comment type="sequence caution" evidence="9">
    <conflict type="erroneous initiation">
        <sequence resource="EMBL-CDS" id="AAN18022"/>
    </conflict>
</comment>
<comment type="sequence caution" evidence="9">
    <conflict type="miscellaneous discrepancy">
        <sequence resource="EMBL-CDS" id="BAC38042"/>
    </conflict>
    <text>Contaminating sequence. Sequence of unknown origin in the C-terminal part.</text>
</comment>